<name>RG1_RAUSE</name>
<dbReference type="EC" id="3.2.1.125" evidence="4 5"/>
<dbReference type="EC" id="2.4.1.219" evidence="4 5"/>
<dbReference type="EMBL" id="AF149311">
    <property type="protein sequence ID" value="AAF03675.1"/>
    <property type="molecule type" value="mRNA"/>
</dbReference>
<dbReference type="PDB" id="3U57">
    <property type="method" value="X-ray"/>
    <property type="resolution" value="2.43 A"/>
    <property type="chains" value="A/B=1-513"/>
</dbReference>
<dbReference type="PDB" id="3U5U">
    <property type="method" value="X-ray"/>
    <property type="resolution" value="2.20 A"/>
    <property type="chains" value="A/B=1-513"/>
</dbReference>
<dbReference type="PDB" id="3U5Y">
    <property type="method" value="X-ray"/>
    <property type="resolution" value="2.30 A"/>
    <property type="chains" value="A/B=1-513"/>
</dbReference>
<dbReference type="PDB" id="3ZJ6">
    <property type="method" value="X-ray"/>
    <property type="resolution" value="2.40 A"/>
    <property type="chains" value="A/B=1-540"/>
</dbReference>
<dbReference type="PDB" id="4A3Y">
    <property type="method" value="X-ray"/>
    <property type="resolution" value="2.15 A"/>
    <property type="chains" value="A/B=1-540"/>
</dbReference>
<dbReference type="PDB" id="4ATD">
    <property type="method" value="X-ray"/>
    <property type="resolution" value="2.10 A"/>
    <property type="chains" value="A/B=1-513"/>
</dbReference>
<dbReference type="PDB" id="4ATL">
    <property type="method" value="X-ray"/>
    <property type="resolution" value="2.52 A"/>
    <property type="chains" value="A/B=1-513"/>
</dbReference>
<dbReference type="PDB" id="4EK7">
    <property type="method" value="X-ray"/>
    <property type="resolution" value="2.30 A"/>
    <property type="chains" value="A/B=1-513"/>
</dbReference>
<dbReference type="PDBsum" id="3U57"/>
<dbReference type="PDBsum" id="3U5U"/>
<dbReference type="PDBsum" id="3U5Y"/>
<dbReference type="PDBsum" id="3ZJ6"/>
<dbReference type="PDBsum" id="4A3Y"/>
<dbReference type="PDBsum" id="4ATD"/>
<dbReference type="PDBsum" id="4ATL"/>
<dbReference type="PDBsum" id="4EK7"/>
<dbReference type="SMR" id="Q9SPP9"/>
<dbReference type="CAZy" id="GH1">
    <property type="family name" value="Glycoside Hydrolase Family 1"/>
</dbReference>
<dbReference type="KEGG" id="ag:AAF03675"/>
<dbReference type="BRENDA" id="3.2.1.125">
    <property type="organism ID" value="5309"/>
</dbReference>
<dbReference type="EvolutionaryTrace" id="Q9SPP9"/>
<dbReference type="GO" id="GO:0050247">
    <property type="term" value="F:raucaffricine beta-glucosidase activity"/>
    <property type="evidence" value="ECO:0000314"/>
    <property type="project" value="UniProtKB"/>
</dbReference>
<dbReference type="GO" id="GO:0050506">
    <property type="term" value="F:vomilenine glucosyltransferase activity"/>
    <property type="evidence" value="ECO:0000314"/>
    <property type="project" value="UniProtKB"/>
</dbReference>
<dbReference type="GO" id="GO:0009821">
    <property type="term" value="P:alkaloid biosynthetic process"/>
    <property type="evidence" value="ECO:0000314"/>
    <property type="project" value="UniProtKB"/>
</dbReference>
<dbReference type="GO" id="GO:0005975">
    <property type="term" value="P:carbohydrate metabolic process"/>
    <property type="evidence" value="ECO:0007669"/>
    <property type="project" value="InterPro"/>
</dbReference>
<dbReference type="FunFam" id="3.20.20.80:FF:000022">
    <property type="entry name" value="Beta-glucosidase 11"/>
    <property type="match status" value="1"/>
</dbReference>
<dbReference type="Gene3D" id="3.20.20.80">
    <property type="entry name" value="Glycosidases"/>
    <property type="match status" value="1"/>
</dbReference>
<dbReference type="InterPro" id="IPR001360">
    <property type="entry name" value="Glyco_hydro_1"/>
</dbReference>
<dbReference type="InterPro" id="IPR033132">
    <property type="entry name" value="Glyco_hydro_1_N_CS"/>
</dbReference>
<dbReference type="InterPro" id="IPR017853">
    <property type="entry name" value="Glycoside_hydrolase_SF"/>
</dbReference>
<dbReference type="PANTHER" id="PTHR10353">
    <property type="entry name" value="GLYCOSYL HYDROLASE"/>
    <property type="match status" value="1"/>
</dbReference>
<dbReference type="PANTHER" id="PTHR10353:SF137">
    <property type="entry name" value="MYROSINASE 3-RELATED"/>
    <property type="match status" value="1"/>
</dbReference>
<dbReference type="Pfam" id="PF00232">
    <property type="entry name" value="Glyco_hydro_1"/>
    <property type="match status" value="1"/>
</dbReference>
<dbReference type="PRINTS" id="PR00131">
    <property type="entry name" value="GLHYDRLASE1"/>
</dbReference>
<dbReference type="SUPFAM" id="SSF51445">
    <property type="entry name" value="(Trans)glycosidases"/>
    <property type="match status" value="1"/>
</dbReference>
<dbReference type="PROSITE" id="PS00653">
    <property type="entry name" value="GLYCOSYL_HYDROL_F1_2"/>
    <property type="match status" value="1"/>
</dbReference>
<proteinExistence type="evidence at protein level"/>
<feature type="chain" id="PRO_0000418400" description="Raucaffricine-O-beta-D-glucosidase">
    <location>
        <begin position="1"/>
        <end position="540"/>
    </location>
</feature>
<feature type="active site" description="Proton donor" evidence="2">
    <location>
        <position position="186"/>
    </location>
</feature>
<feature type="active site" description="Nucleophile" evidence="2">
    <location>
        <position position="420"/>
    </location>
</feature>
<feature type="binding site" evidence="8 9 10 11 12 13">
    <location>
        <position position="36"/>
    </location>
    <ligand>
        <name>a beta-D-glucoside</name>
        <dbReference type="ChEBI" id="CHEBI:22798"/>
    </ligand>
</feature>
<feature type="binding site" evidence="8 9 11 12 13">
    <location>
        <position position="140"/>
    </location>
    <ligand>
        <name>a beta-D-glucoside</name>
        <dbReference type="ChEBI" id="CHEBI:22798"/>
    </ligand>
</feature>
<feature type="binding site" evidence="8 9 10 11 12 13">
    <location>
        <begin position="185"/>
        <end position="186"/>
    </location>
    <ligand>
        <name>a beta-D-glucoside</name>
        <dbReference type="ChEBI" id="CHEBI:22798"/>
    </ligand>
</feature>
<feature type="binding site" evidence="3">
    <location>
        <position position="347"/>
    </location>
    <ligand>
        <name>a beta-D-glucoside</name>
        <dbReference type="ChEBI" id="CHEBI:22798"/>
    </ligand>
</feature>
<feature type="binding site" evidence="8 9 10 11 12 13">
    <location>
        <position position="420"/>
    </location>
    <ligand>
        <name>a beta-D-glucoside</name>
        <dbReference type="ChEBI" id="CHEBI:22798"/>
    </ligand>
</feature>
<feature type="binding site" evidence="8 9 10 11 13">
    <location>
        <position position="469"/>
    </location>
    <ligand>
        <name>a beta-D-glucoside</name>
        <dbReference type="ChEBI" id="CHEBI:22798"/>
    </ligand>
</feature>
<feature type="binding site" evidence="8 9 10 11 12 13">
    <location>
        <begin position="476"/>
        <end position="477"/>
    </location>
    <ligand>
        <name>a beta-D-glucoside</name>
        <dbReference type="ChEBI" id="CHEBI:22798"/>
    </ligand>
</feature>
<feature type="binding site" evidence="1">
    <location>
        <position position="485"/>
    </location>
    <ligand>
        <name>a beta-D-glucoside</name>
        <dbReference type="ChEBI" id="CHEBI:22798"/>
    </ligand>
</feature>
<feature type="site" description="Directs the conformation of W-392">
    <location>
        <position position="390"/>
    </location>
</feature>
<feature type="site" description="Controls the gate shape and acceptance of substrates">
    <location>
        <position position="392"/>
    </location>
</feature>
<feature type="disulfide bond" evidence="2">
    <location>
        <begin position="221"/>
        <end position="230"/>
    </location>
</feature>
<feature type="mutagenesis site" description="Loss of activity." evidence="5">
    <original>E</original>
    <variation>D</variation>
    <variation>Q</variation>
    <location>
        <position position="186"/>
    </location>
</feature>
<feature type="mutagenesis site" description="Reduced activity." evidence="5">
    <original>T</original>
    <variation>A</variation>
    <location>
        <position position="189"/>
    </location>
</feature>
<feature type="mutagenesis site" description="Reduced activity." evidence="5">
    <original>H</original>
    <variation>A</variation>
    <location>
        <position position="193"/>
    </location>
</feature>
<feature type="mutagenesis site" description="Loss of activity." evidence="5">
    <original>Y</original>
    <variation>A</variation>
    <location>
        <position position="200"/>
    </location>
</feature>
<feature type="mutagenesis site" description="Reduced activity." evidence="5">
    <original>S</original>
    <variation>G</variation>
    <location>
        <position position="390"/>
    </location>
</feature>
<feature type="mutagenesis site" description="Loss of activity." evidence="5">
    <original>W</original>
    <variation>A</variation>
    <location>
        <position position="392"/>
    </location>
</feature>
<feature type="mutagenesis site" description="Loss of activity." evidence="5">
    <original>E</original>
    <variation>Q</variation>
    <location>
        <position position="420"/>
    </location>
</feature>
<feature type="mutagenesis site" description="Loss of activity." evidence="5">
    <original>E</original>
    <variation>A</variation>
    <variation>L</variation>
    <location>
        <position position="476"/>
    </location>
</feature>
<feature type="mutagenesis site" description="Reduced activity." evidence="5">
    <original>F</original>
    <variation>Y</variation>
    <location>
        <position position="485"/>
    </location>
</feature>
<feature type="helix" evidence="16">
    <location>
        <begin position="14"/>
        <end position="16"/>
    </location>
</feature>
<feature type="helix" evidence="16">
    <location>
        <begin position="19"/>
        <end position="21"/>
    </location>
</feature>
<feature type="strand" evidence="16">
    <location>
        <begin position="27"/>
        <end position="31"/>
    </location>
</feature>
<feature type="helix" evidence="16">
    <location>
        <begin position="34"/>
        <end position="37"/>
    </location>
</feature>
<feature type="helix" evidence="16">
    <location>
        <begin position="50"/>
        <end position="57"/>
    </location>
</feature>
<feature type="helix" evidence="16">
    <location>
        <begin position="59"/>
        <end position="61"/>
    </location>
</feature>
<feature type="helix" evidence="16">
    <location>
        <begin position="63"/>
        <end position="65"/>
    </location>
</feature>
<feature type="turn" evidence="16">
    <location>
        <begin position="68"/>
        <end position="72"/>
    </location>
</feature>
<feature type="helix" evidence="16">
    <location>
        <begin position="74"/>
        <end position="88"/>
    </location>
</feature>
<feature type="strand" evidence="16">
    <location>
        <begin position="91"/>
        <end position="96"/>
    </location>
</feature>
<feature type="helix" evidence="16">
    <location>
        <begin position="99"/>
        <end position="102"/>
    </location>
</feature>
<feature type="helix" evidence="16">
    <location>
        <begin position="108"/>
        <end position="110"/>
    </location>
</feature>
<feature type="helix" evidence="16">
    <location>
        <begin position="114"/>
        <end position="129"/>
    </location>
</feature>
<feature type="strand" evidence="16">
    <location>
        <begin position="133"/>
        <end position="141"/>
    </location>
</feature>
<feature type="helix" evidence="16">
    <location>
        <begin position="145"/>
        <end position="151"/>
    </location>
</feature>
<feature type="helix" evidence="16">
    <location>
        <begin position="153"/>
        <end position="155"/>
    </location>
</feature>
<feature type="helix" evidence="16">
    <location>
        <begin position="159"/>
        <end position="174"/>
    </location>
</feature>
<feature type="turn" evidence="16">
    <location>
        <begin position="175"/>
        <end position="177"/>
    </location>
</feature>
<feature type="strand" evidence="16">
    <location>
        <begin position="180"/>
        <end position="185"/>
    </location>
</feature>
<feature type="helix" evidence="16">
    <location>
        <begin position="187"/>
        <end position="195"/>
    </location>
</feature>
<feature type="turn" evidence="16">
    <location>
        <begin position="235"/>
        <end position="237"/>
    </location>
</feature>
<feature type="helix" evidence="16">
    <location>
        <begin position="238"/>
        <end position="260"/>
    </location>
</feature>
<feature type="helix" evidence="16">
    <location>
        <begin position="262"/>
        <end position="265"/>
    </location>
</feature>
<feature type="strand" evidence="16">
    <location>
        <begin position="268"/>
        <end position="282"/>
    </location>
</feature>
<feature type="helix" evidence="16">
    <location>
        <begin position="286"/>
        <end position="299"/>
    </location>
</feature>
<feature type="helix" evidence="16">
    <location>
        <begin position="301"/>
        <end position="304"/>
    </location>
</feature>
<feature type="helix" evidence="16">
    <location>
        <begin position="306"/>
        <end position="309"/>
    </location>
</feature>
<feature type="helix" evidence="16">
    <location>
        <begin position="314"/>
        <end position="320"/>
    </location>
</feature>
<feature type="helix" evidence="16">
    <location>
        <begin position="321"/>
        <end position="323"/>
    </location>
</feature>
<feature type="helix" evidence="16">
    <location>
        <begin position="329"/>
        <end position="335"/>
    </location>
</feature>
<feature type="strand" evidence="16">
    <location>
        <begin position="340"/>
        <end position="354"/>
    </location>
</feature>
<feature type="helix" evidence="16">
    <location>
        <begin position="367"/>
        <end position="370"/>
    </location>
</feature>
<feature type="strand" evidence="16">
    <location>
        <begin position="373"/>
        <end position="376"/>
    </location>
</feature>
<feature type="strand" evidence="14">
    <location>
        <begin position="378"/>
        <end position="381"/>
    </location>
</feature>
<feature type="strand" evidence="16">
    <location>
        <begin position="382"/>
        <end position="385"/>
    </location>
</feature>
<feature type="helix" evidence="16">
    <location>
        <begin position="398"/>
        <end position="411"/>
    </location>
</feature>
<feature type="strand" evidence="16">
    <location>
        <begin position="414"/>
        <end position="421"/>
    </location>
</feature>
<feature type="helix" evidence="16">
    <location>
        <begin position="433"/>
        <end position="436"/>
    </location>
</feature>
<feature type="helix" evidence="16">
    <location>
        <begin position="440"/>
        <end position="458"/>
    </location>
</feature>
<feature type="strand" evidence="16">
    <location>
        <begin position="463"/>
        <end position="469"/>
    </location>
</feature>
<feature type="helix" evidence="16">
    <location>
        <begin position="477"/>
        <end position="479"/>
    </location>
</feature>
<feature type="strand" evidence="15">
    <location>
        <begin position="482"/>
        <end position="484"/>
    </location>
</feature>
<feature type="strand" evidence="16">
    <location>
        <begin position="487"/>
        <end position="490"/>
    </location>
</feature>
<feature type="turn" evidence="16">
    <location>
        <begin position="492"/>
        <end position="496"/>
    </location>
</feature>
<feature type="strand" evidence="16">
    <location>
        <begin position="498"/>
        <end position="500"/>
    </location>
</feature>
<feature type="helix" evidence="16">
    <location>
        <begin position="502"/>
        <end position="511"/>
    </location>
</feature>
<protein>
    <recommendedName>
        <fullName evidence="6">Raucaffricine-O-beta-D-glucosidase</fullName>
        <shortName evidence="6">Raucaffricine beta-glucosidase</shortName>
        <shortName evidence="6">RsRG</shortName>
        <ecNumber evidence="4 5">3.2.1.125</ecNumber>
    </recommendedName>
    <alternativeName>
        <fullName evidence="6">Vomilenine glucosyltransferase</fullName>
        <shortName evidence="6">RsVGT</shortName>
        <ecNumber evidence="4 5">2.4.1.219</ecNumber>
    </alternativeName>
</protein>
<reference key="1">
    <citation type="journal article" date="2000" name="Phytochemistry">
        <title>Molecular cloning and functional bacterial expression of a plant glucosidase specifically involved in alkaloid biosynthesis.</title>
        <authorList>
            <person name="Warzecha H."/>
            <person name="Gerasimenko I."/>
            <person name="Kutchan T.M."/>
            <person name="Stoeckigt J."/>
        </authorList>
    </citation>
    <scope>NUCLEOTIDE SEQUENCE [MRNA]</scope>
    <scope>PROTEIN SEQUENCE OF 80-111; 319-326; 403-408; 410-425 AND 428-438</scope>
    <scope>FUNCTION</scope>
    <scope>CATALYTIC ACTIVITY</scope>
    <scope>BIOPHYSICOCHEMICAL PROPERTIES</scope>
    <source>
        <strain>BENTH. ex KURZ</strain>
        <tissue>Protoplast</tissue>
    </source>
</reference>
<reference key="2">
    <citation type="journal article" date="2012" name="ACS Chem. Biol.">
        <title>Structures of alkaloid biosynthetic glucosidases decode substrate specificity.</title>
        <authorList>
            <person name="Xia L."/>
            <person name="Ruppert M."/>
            <person name="Wang M."/>
            <person name="Panjikar S."/>
            <person name="Lin H."/>
            <person name="Rajendran C."/>
            <person name="Barleben L."/>
            <person name="Stoeckigt J."/>
        </authorList>
    </citation>
    <scope>X-RAY CRYSTALLOGRAPHY (2.20 ANGSTROMS) OF 1-513 IN COMPLEX WITH SUBSTRATE</scope>
    <scope>BIOPHYSICOCHEMICAL PROPERTIES</scope>
    <scope>CATALYTIC ACTIVITY</scope>
    <scope>MUTAGENESIS OF GLU-186; THR-189; HIS-193; TYR-200; SER-390; TRP-392; GLU-420; GLU-476 AND PHE-485</scope>
</reference>
<reference key="3">
    <citation type="journal article" date="2013" name="Phytochemistry">
        <title>High speed X-ray analysis of plant enzymes at room temperature.</title>
        <authorList>
            <person name="Xia L."/>
            <person name="Rajendran C."/>
            <person name="Ruppert M."/>
            <person name="Panjikar S."/>
            <person name="Wang M."/>
            <person name="Stoeckigt J."/>
        </authorList>
    </citation>
    <scope>X-RAY CRYSTALLOGRAPHY (2.10 ANGSTROMS) OF 1-513 IN COMPLEX WITH BETA-D-GLUCOSE</scope>
</reference>
<evidence type="ECO:0000250" key="1">
    <source>
        <dbReference type="UniProtKB" id="Q1XH05"/>
    </source>
</evidence>
<evidence type="ECO:0000250" key="2">
    <source>
        <dbReference type="UniProtKB" id="Q7XSK0"/>
    </source>
</evidence>
<evidence type="ECO:0000250" key="3">
    <source>
        <dbReference type="UniProtKB" id="Q8L7J2"/>
    </source>
</evidence>
<evidence type="ECO:0000269" key="4">
    <source>
    </source>
</evidence>
<evidence type="ECO:0000269" key="5">
    <source>
    </source>
</evidence>
<evidence type="ECO:0000303" key="6">
    <source>
    </source>
</evidence>
<evidence type="ECO:0000305" key="7"/>
<evidence type="ECO:0000305" key="8">
    <source>
    </source>
</evidence>
<evidence type="ECO:0000305" key="9">
    <source>
    </source>
</evidence>
<evidence type="ECO:0007744" key="10">
    <source>
        <dbReference type="PDB" id="3U5Y"/>
    </source>
</evidence>
<evidence type="ECO:0007744" key="11">
    <source>
        <dbReference type="PDB" id="3ZJ6"/>
    </source>
</evidence>
<evidence type="ECO:0007744" key="12">
    <source>
        <dbReference type="PDB" id="4ATL"/>
    </source>
</evidence>
<evidence type="ECO:0007744" key="13">
    <source>
        <dbReference type="PDB" id="4EK7"/>
    </source>
</evidence>
<evidence type="ECO:0007829" key="14">
    <source>
        <dbReference type="PDB" id="3U5U"/>
    </source>
</evidence>
<evidence type="ECO:0007829" key="15">
    <source>
        <dbReference type="PDB" id="3ZJ6"/>
    </source>
</evidence>
<evidence type="ECO:0007829" key="16">
    <source>
        <dbReference type="PDB" id="4ATD"/>
    </source>
</evidence>
<sequence>MATQSSAVIDSNDATRISRSDFPADFIMGTGSSAYQIEGGARDGGRGPSIWDTFTHRRPDMIRGGTNGDVAVDSYHLYKEDVNILKNLGLDAYRFSISWSRVLPGGRLSGGVNKEGINYYNNLIDGLLANGIKPFVTLFHWDVPQALEDEYGGFLSPRIVDDFCEYAELCFWEFGDRVKHWMTLNEPWTFSVHGYATGLYAPGRGRTSPEHVNHPTVQHRCSTVAPQCICSTGNPGTEPYWVTHHLLLAHAAAVELYKNKFQRGQEGQIGISHATQWMEPWDENSASDVEAAARALDFMLGWFMEPITSGDYPKSMKKFVGSRLPKFSPEQSKMLKGSYDFVGLNYYTASYVTNASTNSSGSNNFSYNTDIHVTYETDRNGVPIGPQSGSDWLLIYPEGIRKILVYTKKTYNVPLIYVTENGVDDVKNTNLTLSEARKDSMRLKYLQDHIFNVRQAMNDGVNVKGYFAWSLLDNFEWGEGYGVRFGIIHIDYNDNFARYPKDSAVWLMNSFHKNISKLPAVKRSIREDDEEQVSSKRLRK</sequence>
<organism>
    <name type="scientific">Rauvolfia serpentina</name>
    <name type="common">Serpentine wood</name>
    <name type="synonym">Ophioxylon serpentinum</name>
    <dbReference type="NCBI Taxonomy" id="4060"/>
    <lineage>
        <taxon>Eukaryota</taxon>
        <taxon>Viridiplantae</taxon>
        <taxon>Streptophyta</taxon>
        <taxon>Embryophyta</taxon>
        <taxon>Tracheophyta</taxon>
        <taxon>Spermatophyta</taxon>
        <taxon>Magnoliopsida</taxon>
        <taxon>eudicotyledons</taxon>
        <taxon>Gunneridae</taxon>
        <taxon>Pentapetalae</taxon>
        <taxon>asterids</taxon>
        <taxon>lamiids</taxon>
        <taxon>Gentianales</taxon>
        <taxon>Apocynaceae</taxon>
        <taxon>Rauvolfioideae</taxon>
        <taxon>Vinceae</taxon>
        <taxon>Rauvolfiinae</taxon>
        <taxon>Rauvolfia</taxon>
    </lineage>
</organism>
<keyword id="KW-0002">3D-structure</keyword>
<keyword id="KW-0017">Alkaloid metabolism</keyword>
<keyword id="KW-0903">Direct protein sequencing</keyword>
<keyword id="KW-1015">Disulfide bond</keyword>
<keyword id="KW-0326">Glycosidase</keyword>
<keyword id="KW-0378">Hydrolase</keyword>
<keyword id="KW-0808">Transferase</keyword>
<gene>
    <name evidence="6" type="primary">RG</name>
    <name evidence="6" type="synonym">VGT</name>
</gene>
<accession>Q9SPP9</accession>
<comment type="function">
    <text evidence="4">Glucosidase specifically involved in alkaloid biosynthesis leading to the accumulation of several alkaloids, including ajmaline, an important plant-derived pharmaceutical used in the treatment of heart disorders.</text>
</comment>
<comment type="catalytic activity">
    <reaction evidence="4 5">
        <text>raucaffricine + H2O = vomilenine + D-glucose</text>
        <dbReference type="Rhea" id="RHEA:14557"/>
        <dbReference type="ChEBI" id="CHEBI:4167"/>
        <dbReference type="ChEBI" id="CHEBI:15377"/>
        <dbReference type="ChEBI" id="CHEBI:16408"/>
        <dbReference type="ChEBI" id="CHEBI:17400"/>
        <dbReference type="EC" id="3.2.1.125"/>
    </reaction>
</comment>
<comment type="catalytic activity">
    <reaction evidence="4 5">
        <text>vomilenine + UDP-alpha-D-glucose = raucaffricine + UDP + H(+)</text>
        <dbReference type="Rhea" id="RHEA:19385"/>
        <dbReference type="ChEBI" id="CHEBI:15378"/>
        <dbReference type="ChEBI" id="CHEBI:16408"/>
        <dbReference type="ChEBI" id="CHEBI:17400"/>
        <dbReference type="ChEBI" id="CHEBI:58223"/>
        <dbReference type="ChEBI" id="CHEBI:58885"/>
        <dbReference type="EC" id="2.4.1.219"/>
    </reaction>
</comment>
<comment type="biophysicochemical properties">
    <kinetics>
        <KM evidence="4 5">1.3 mM for raucaffricine (at pH 5 and 28 degrees Celsius)</KM>
        <KM evidence="4 5">1.8 mM for strictosidine (at pH 5 and 28 degrees Celsius)</KM>
        <Vmax evidence="4 5">0.5 nmol/sec/ug enzyme with raucaffricine as substrate (at pH 5 and 28 degrees Celsius)</Vmax>
        <Vmax evidence="4 5">2.6 pmol/sec/ug enzyme with strictosidine as substrate (at pH 5 and 28 degrees Celsius)</Vmax>
    </kinetics>
</comment>
<comment type="similarity">
    <text evidence="7">Belongs to the glycosyl hydrolase 1 family.</text>
</comment>